<sequence>MVDITAAELKAAEAIFGDRLELAERYVEHLATSGTERGLIGPREVPRLWSRHVLNCAVIEREIARGSHVADVGSGAGLPGLCLAIARPDLELTLIEPLERRVIWLQEVVDDLGLTNVTVMRTRAELAVGMVNADVVTARAVSALSNLAGLTIPLLGGKGEVVAIKGRSAGEEIEKAAKAIRKLGGVQTSVVVVGEDLLEEPTTVVRIIVNKSQKIA</sequence>
<organism>
    <name type="scientific">Arthrobacter sp. (strain FB24)</name>
    <dbReference type="NCBI Taxonomy" id="290399"/>
    <lineage>
        <taxon>Bacteria</taxon>
        <taxon>Bacillati</taxon>
        <taxon>Actinomycetota</taxon>
        <taxon>Actinomycetes</taxon>
        <taxon>Micrococcales</taxon>
        <taxon>Micrococcaceae</taxon>
        <taxon>Arthrobacter</taxon>
    </lineage>
</organism>
<gene>
    <name evidence="1" type="primary">rsmG</name>
    <name type="ordered locus">Arth_4167</name>
</gene>
<reference key="1">
    <citation type="journal article" date="2013" name="Stand. Genomic Sci.">
        <title>Complete genome sequence of Arthrobacter sp. strain FB24.</title>
        <authorList>
            <person name="Nakatsu C.H."/>
            <person name="Barabote R."/>
            <person name="Thompson S."/>
            <person name="Bruce D."/>
            <person name="Detter C."/>
            <person name="Brettin T."/>
            <person name="Han C."/>
            <person name="Beasley F."/>
            <person name="Chen W."/>
            <person name="Konopka A."/>
            <person name="Xie G."/>
        </authorList>
    </citation>
    <scope>NUCLEOTIDE SEQUENCE [LARGE SCALE GENOMIC DNA]</scope>
    <source>
        <strain>FB24</strain>
    </source>
</reference>
<keyword id="KW-0963">Cytoplasm</keyword>
<keyword id="KW-0489">Methyltransferase</keyword>
<keyword id="KW-1185">Reference proteome</keyword>
<keyword id="KW-0698">rRNA processing</keyword>
<keyword id="KW-0949">S-adenosyl-L-methionine</keyword>
<keyword id="KW-0808">Transferase</keyword>
<accession>A0K2M2</accession>
<protein>
    <recommendedName>
        <fullName evidence="1">Ribosomal RNA small subunit methyltransferase G</fullName>
        <ecNumber evidence="1">2.1.1.-</ecNumber>
    </recommendedName>
    <alternativeName>
        <fullName evidence="1">16S rRNA 7-methylguanosine methyltransferase</fullName>
        <shortName evidence="1">16S rRNA m7G methyltransferase</shortName>
    </alternativeName>
</protein>
<dbReference type="EC" id="2.1.1.-" evidence="1"/>
<dbReference type="EMBL" id="CP000454">
    <property type="protein sequence ID" value="ABK05542.1"/>
    <property type="status" value="ALT_INIT"/>
    <property type="molecule type" value="Genomic_DNA"/>
</dbReference>
<dbReference type="RefSeq" id="WP_043430154.1">
    <property type="nucleotide sequence ID" value="NC_008541.1"/>
</dbReference>
<dbReference type="SMR" id="A0K2M2"/>
<dbReference type="STRING" id="290399.Arth_4167"/>
<dbReference type="KEGG" id="art:Arth_4167"/>
<dbReference type="eggNOG" id="COG0357">
    <property type="taxonomic scope" value="Bacteria"/>
</dbReference>
<dbReference type="HOGENOM" id="CLU_065341_5_0_11"/>
<dbReference type="OrthoDB" id="9808773at2"/>
<dbReference type="Proteomes" id="UP000000754">
    <property type="component" value="Chromosome"/>
</dbReference>
<dbReference type="GO" id="GO:0005829">
    <property type="term" value="C:cytosol"/>
    <property type="evidence" value="ECO:0007669"/>
    <property type="project" value="TreeGrafter"/>
</dbReference>
<dbReference type="GO" id="GO:0070043">
    <property type="term" value="F:rRNA (guanine-N7-)-methyltransferase activity"/>
    <property type="evidence" value="ECO:0007669"/>
    <property type="project" value="UniProtKB-UniRule"/>
</dbReference>
<dbReference type="Gene3D" id="3.40.50.150">
    <property type="entry name" value="Vaccinia Virus protein VP39"/>
    <property type="match status" value="1"/>
</dbReference>
<dbReference type="HAMAP" id="MF_00074">
    <property type="entry name" value="16SrRNA_methyltr_G"/>
    <property type="match status" value="1"/>
</dbReference>
<dbReference type="InterPro" id="IPR003682">
    <property type="entry name" value="rRNA_ssu_MeTfrase_G"/>
</dbReference>
<dbReference type="InterPro" id="IPR029063">
    <property type="entry name" value="SAM-dependent_MTases_sf"/>
</dbReference>
<dbReference type="NCBIfam" id="TIGR00138">
    <property type="entry name" value="rsmG_gidB"/>
    <property type="match status" value="1"/>
</dbReference>
<dbReference type="PANTHER" id="PTHR31760">
    <property type="entry name" value="S-ADENOSYL-L-METHIONINE-DEPENDENT METHYLTRANSFERASES SUPERFAMILY PROTEIN"/>
    <property type="match status" value="1"/>
</dbReference>
<dbReference type="PANTHER" id="PTHR31760:SF0">
    <property type="entry name" value="S-ADENOSYL-L-METHIONINE-DEPENDENT METHYLTRANSFERASES SUPERFAMILY PROTEIN"/>
    <property type="match status" value="1"/>
</dbReference>
<dbReference type="Pfam" id="PF02527">
    <property type="entry name" value="GidB"/>
    <property type="match status" value="1"/>
</dbReference>
<dbReference type="SUPFAM" id="SSF53335">
    <property type="entry name" value="S-adenosyl-L-methionine-dependent methyltransferases"/>
    <property type="match status" value="1"/>
</dbReference>
<name>RSMG_ARTS2</name>
<evidence type="ECO:0000255" key="1">
    <source>
        <dbReference type="HAMAP-Rule" id="MF_00074"/>
    </source>
</evidence>
<evidence type="ECO:0000305" key="2"/>
<feature type="chain" id="PRO_0000335308" description="Ribosomal RNA small subunit methyltransferase G">
    <location>
        <begin position="1"/>
        <end position="216"/>
    </location>
</feature>
<feature type="binding site" evidence="1">
    <location>
        <position position="73"/>
    </location>
    <ligand>
        <name>S-adenosyl-L-methionine</name>
        <dbReference type="ChEBI" id="CHEBI:59789"/>
    </ligand>
</feature>
<feature type="binding site" evidence="1">
    <location>
        <position position="78"/>
    </location>
    <ligand>
        <name>S-adenosyl-L-methionine</name>
        <dbReference type="ChEBI" id="CHEBI:59789"/>
    </ligand>
</feature>
<feature type="binding site" evidence="1">
    <location>
        <begin position="124"/>
        <end position="125"/>
    </location>
    <ligand>
        <name>S-adenosyl-L-methionine</name>
        <dbReference type="ChEBI" id="CHEBI:59789"/>
    </ligand>
</feature>
<feature type="binding site" evidence="1">
    <location>
        <position position="139"/>
    </location>
    <ligand>
        <name>S-adenosyl-L-methionine</name>
        <dbReference type="ChEBI" id="CHEBI:59789"/>
    </ligand>
</feature>
<comment type="function">
    <text evidence="1">Specifically methylates the N7 position of guanine in position 518 of 16S rRNA.</text>
</comment>
<comment type="subcellular location">
    <subcellularLocation>
        <location evidence="1">Cytoplasm</location>
    </subcellularLocation>
</comment>
<comment type="similarity">
    <text evidence="1">Belongs to the methyltransferase superfamily. RNA methyltransferase RsmG family.</text>
</comment>
<comment type="sequence caution" evidence="2">
    <conflict type="erroneous initiation">
        <sequence resource="EMBL-CDS" id="ABK05542"/>
    </conflict>
</comment>
<proteinExistence type="inferred from homology"/>